<evidence type="ECO:0000255" key="1">
    <source>
        <dbReference type="HAMAP-Rule" id="MF_01031"/>
    </source>
</evidence>
<comment type="function">
    <text evidence="1">Catalyzes the isomerization between 2-isopropylmalate and 3-isopropylmalate, via the formation of 2-isopropylmaleate.</text>
</comment>
<comment type="catalytic activity">
    <reaction evidence="1">
        <text>(2R,3S)-3-isopropylmalate = (2S)-2-isopropylmalate</text>
        <dbReference type="Rhea" id="RHEA:32287"/>
        <dbReference type="ChEBI" id="CHEBI:1178"/>
        <dbReference type="ChEBI" id="CHEBI:35121"/>
        <dbReference type="EC" id="4.2.1.33"/>
    </reaction>
</comment>
<comment type="pathway">
    <text evidence="1">Amino-acid biosynthesis; L-leucine biosynthesis; L-leucine from 3-methyl-2-oxobutanoate: step 2/4.</text>
</comment>
<comment type="subunit">
    <text evidence="1">Heterodimer of LeuC and LeuD.</text>
</comment>
<comment type="similarity">
    <text evidence="1">Belongs to the LeuD family. LeuD type 1 subfamily.</text>
</comment>
<protein>
    <recommendedName>
        <fullName evidence="1">3-isopropylmalate dehydratase small subunit</fullName>
        <ecNumber evidence="1">4.2.1.33</ecNumber>
    </recommendedName>
    <alternativeName>
        <fullName evidence="1">Alpha-IPM isomerase</fullName>
        <shortName evidence="1">IPMI</shortName>
    </alternativeName>
    <alternativeName>
        <fullName evidence="1">Isopropylmalate isomerase</fullName>
    </alternativeName>
</protein>
<accession>B1JKA1</accession>
<gene>
    <name evidence="1" type="primary">leuD</name>
    <name type="ordered locus">YPK_3538</name>
</gene>
<feature type="chain" id="PRO_1000135844" description="3-isopropylmalate dehydratase small subunit">
    <location>
        <begin position="1"/>
        <end position="200"/>
    </location>
</feature>
<dbReference type="EC" id="4.2.1.33" evidence="1"/>
<dbReference type="EMBL" id="CP000950">
    <property type="protein sequence ID" value="ACA69805.1"/>
    <property type="molecule type" value="Genomic_DNA"/>
</dbReference>
<dbReference type="RefSeq" id="WP_002210456.1">
    <property type="nucleotide sequence ID" value="NZ_CP009792.1"/>
</dbReference>
<dbReference type="SMR" id="B1JKA1"/>
<dbReference type="GeneID" id="57974082"/>
<dbReference type="KEGG" id="ypy:YPK_3538"/>
<dbReference type="PATRIC" id="fig|502800.11.peg.4282"/>
<dbReference type="UniPathway" id="UPA00048">
    <property type="reaction ID" value="UER00071"/>
</dbReference>
<dbReference type="GO" id="GO:0009316">
    <property type="term" value="C:3-isopropylmalate dehydratase complex"/>
    <property type="evidence" value="ECO:0007669"/>
    <property type="project" value="InterPro"/>
</dbReference>
<dbReference type="GO" id="GO:0003861">
    <property type="term" value="F:3-isopropylmalate dehydratase activity"/>
    <property type="evidence" value="ECO:0007669"/>
    <property type="project" value="UniProtKB-UniRule"/>
</dbReference>
<dbReference type="GO" id="GO:0009098">
    <property type="term" value="P:L-leucine biosynthetic process"/>
    <property type="evidence" value="ECO:0007669"/>
    <property type="project" value="UniProtKB-UniRule"/>
</dbReference>
<dbReference type="CDD" id="cd01577">
    <property type="entry name" value="IPMI_Swivel"/>
    <property type="match status" value="1"/>
</dbReference>
<dbReference type="FunFam" id="3.20.19.10:FF:000003">
    <property type="entry name" value="3-isopropylmalate dehydratase small subunit"/>
    <property type="match status" value="1"/>
</dbReference>
<dbReference type="Gene3D" id="3.20.19.10">
    <property type="entry name" value="Aconitase, domain 4"/>
    <property type="match status" value="1"/>
</dbReference>
<dbReference type="HAMAP" id="MF_01031">
    <property type="entry name" value="LeuD_type1"/>
    <property type="match status" value="1"/>
</dbReference>
<dbReference type="InterPro" id="IPR004431">
    <property type="entry name" value="3-IsopropMal_deHydase_ssu"/>
</dbReference>
<dbReference type="InterPro" id="IPR015928">
    <property type="entry name" value="Aconitase/3IPM_dehydase_swvl"/>
</dbReference>
<dbReference type="InterPro" id="IPR000573">
    <property type="entry name" value="AconitaseA/IPMdHydase_ssu_swvl"/>
</dbReference>
<dbReference type="InterPro" id="IPR033940">
    <property type="entry name" value="IPMI_Swivel"/>
</dbReference>
<dbReference type="InterPro" id="IPR050075">
    <property type="entry name" value="LeuD"/>
</dbReference>
<dbReference type="NCBIfam" id="TIGR00171">
    <property type="entry name" value="leuD"/>
    <property type="match status" value="1"/>
</dbReference>
<dbReference type="NCBIfam" id="NF002458">
    <property type="entry name" value="PRK01641.1"/>
    <property type="match status" value="1"/>
</dbReference>
<dbReference type="PANTHER" id="PTHR43345:SF5">
    <property type="entry name" value="3-ISOPROPYLMALATE DEHYDRATASE SMALL SUBUNIT"/>
    <property type="match status" value="1"/>
</dbReference>
<dbReference type="PANTHER" id="PTHR43345">
    <property type="entry name" value="3-ISOPROPYLMALATE DEHYDRATASE SMALL SUBUNIT 2-RELATED-RELATED"/>
    <property type="match status" value="1"/>
</dbReference>
<dbReference type="Pfam" id="PF00694">
    <property type="entry name" value="Aconitase_C"/>
    <property type="match status" value="1"/>
</dbReference>
<dbReference type="SUPFAM" id="SSF52016">
    <property type="entry name" value="LeuD/IlvD-like"/>
    <property type="match status" value="1"/>
</dbReference>
<name>LEUD_YERPY</name>
<organism>
    <name type="scientific">Yersinia pseudotuberculosis serotype O:3 (strain YPIII)</name>
    <dbReference type="NCBI Taxonomy" id="502800"/>
    <lineage>
        <taxon>Bacteria</taxon>
        <taxon>Pseudomonadati</taxon>
        <taxon>Pseudomonadota</taxon>
        <taxon>Gammaproteobacteria</taxon>
        <taxon>Enterobacterales</taxon>
        <taxon>Yersiniaceae</taxon>
        <taxon>Yersinia</taxon>
    </lineage>
</organism>
<sequence length="200" mass="22471">MAKFIQHIGLVAPLDAANVDTDAIIPKQFLQKVTRTGFGQHLFNDWRFLDDAGKVPNPDFVLNLPRYQGATILLARENFGCGSSREHAPWALTDFGFKVVIAPSFADIFYGNAFNNQLLPVTLSEADIDTLFQLVKENEGIEFVVDLEQQTVNAGGKSYAFEIDPFRRHCMINGLDSIGLTLQHEHNISAYEKQQPEFLR</sequence>
<keyword id="KW-0028">Amino-acid biosynthesis</keyword>
<keyword id="KW-0100">Branched-chain amino acid biosynthesis</keyword>
<keyword id="KW-0432">Leucine biosynthesis</keyword>
<keyword id="KW-0456">Lyase</keyword>
<proteinExistence type="inferred from homology"/>
<reference key="1">
    <citation type="submission" date="2008-02" db="EMBL/GenBank/DDBJ databases">
        <title>Complete sequence of Yersinia pseudotuberculosis YPIII.</title>
        <authorList>
            <consortium name="US DOE Joint Genome Institute"/>
            <person name="Copeland A."/>
            <person name="Lucas S."/>
            <person name="Lapidus A."/>
            <person name="Glavina del Rio T."/>
            <person name="Dalin E."/>
            <person name="Tice H."/>
            <person name="Bruce D."/>
            <person name="Goodwin L."/>
            <person name="Pitluck S."/>
            <person name="Munk A.C."/>
            <person name="Brettin T."/>
            <person name="Detter J.C."/>
            <person name="Han C."/>
            <person name="Tapia R."/>
            <person name="Schmutz J."/>
            <person name="Larimer F."/>
            <person name="Land M."/>
            <person name="Hauser L."/>
            <person name="Challacombe J.F."/>
            <person name="Green L."/>
            <person name="Lindler L.E."/>
            <person name="Nikolich M.P."/>
            <person name="Richardson P."/>
        </authorList>
    </citation>
    <scope>NUCLEOTIDE SEQUENCE [LARGE SCALE GENOMIC DNA]</scope>
    <source>
        <strain>YPIII</strain>
    </source>
</reference>